<protein>
    <recommendedName>
        <fullName evidence="1">UDP-N-acetylmuramoyl-L-alanyl-D-glutamate--2,6-diaminopimelate ligase</fullName>
        <ecNumber evidence="1">6.3.2.13</ecNumber>
    </recommendedName>
    <alternativeName>
        <fullName evidence="1">Meso-A2pm-adding enzyme</fullName>
    </alternativeName>
    <alternativeName>
        <fullName evidence="1">Meso-diaminopimelate-adding enzyme</fullName>
    </alternativeName>
    <alternativeName>
        <fullName evidence="1">UDP-MurNAc-L-Ala-D-Glu:meso-diaminopimelate ligase</fullName>
    </alternativeName>
    <alternativeName>
        <fullName evidence="1">UDP-MurNAc-tripeptide synthetase</fullName>
    </alternativeName>
    <alternativeName>
        <fullName evidence="1">UDP-N-acetylmuramyl-tripeptide synthetase</fullName>
    </alternativeName>
</protein>
<accession>Q8Y5L9</accession>
<proteinExistence type="inferred from homology"/>
<evidence type="ECO:0000255" key="1">
    <source>
        <dbReference type="HAMAP-Rule" id="MF_00208"/>
    </source>
</evidence>
<feature type="chain" id="PRO_0000101911" description="UDP-N-acetylmuramoyl-L-alanyl-D-glutamate--2,6-diaminopimelate ligase">
    <location>
        <begin position="1"/>
        <end position="491"/>
    </location>
</feature>
<feature type="short sequence motif" description="Meso-diaminopimelate recognition motif">
    <location>
        <begin position="407"/>
        <end position="410"/>
    </location>
</feature>
<feature type="binding site" evidence="1">
    <location>
        <position position="30"/>
    </location>
    <ligand>
        <name>UDP-N-acetyl-alpha-D-muramoyl-L-alanyl-D-glutamate</name>
        <dbReference type="ChEBI" id="CHEBI:83900"/>
    </ligand>
</feature>
<feature type="binding site" evidence="1">
    <location>
        <begin position="108"/>
        <end position="114"/>
    </location>
    <ligand>
        <name>ATP</name>
        <dbReference type="ChEBI" id="CHEBI:30616"/>
    </ligand>
</feature>
<feature type="binding site" evidence="1">
    <location>
        <position position="149"/>
    </location>
    <ligand>
        <name>UDP-N-acetyl-alpha-D-muramoyl-L-alanyl-D-glutamate</name>
        <dbReference type="ChEBI" id="CHEBI:83900"/>
    </ligand>
</feature>
<feature type="binding site" evidence="1">
    <location>
        <begin position="150"/>
        <end position="151"/>
    </location>
    <ligand>
        <name>UDP-N-acetyl-alpha-D-muramoyl-L-alanyl-D-glutamate</name>
        <dbReference type="ChEBI" id="CHEBI:83900"/>
    </ligand>
</feature>
<feature type="binding site" evidence="1">
    <location>
        <position position="177"/>
    </location>
    <ligand>
        <name>UDP-N-acetyl-alpha-D-muramoyl-L-alanyl-D-glutamate</name>
        <dbReference type="ChEBI" id="CHEBI:83900"/>
    </ligand>
</feature>
<feature type="binding site" evidence="1">
    <location>
        <position position="183"/>
    </location>
    <ligand>
        <name>UDP-N-acetyl-alpha-D-muramoyl-L-alanyl-D-glutamate</name>
        <dbReference type="ChEBI" id="CHEBI:83900"/>
    </ligand>
</feature>
<feature type="binding site" evidence="1">
    <location>
        <position position="185"/>
    </location>
    <ligand>
        <name>UDP-N-acetyl-alpha-D-muramoyl-L-alanyl-D-glutamate</name>
        <dbReference type="ChEBI" id="CHEBI:83900"/>
    </ligand>
</feature>
<feature type="binding site" evidence="1">
    <location>
        <position position="383"/>
    </location>
    <ligand>
        <name>meso-2,6-diaminopimelate</name>
        <dbReference type="ChEBI" id="CHEBI:57791"/>
    </ligand>
</feature>
<feature type="binding site" evidence="1">
    <location>
        <begin position="407"/>
        <end position="410"/>
    </location>
    <ligand>
        <name>meso-2,6-diaminopimelate</name>
        <dbReference type="ChEBI" id="CHEBI:57791"/>
    </ligand>
</feature>
<feature type="binding site" evidence="1">
    <location>
        <position position="458"/>
    </location>
    <ligand>
        <name>meso-2,6-diaminopimelate</name>
        <dbReference type="ChEBI" id="CHEBI:57791"/>
    </ligand>
</feature>
<feature type="binding site" evidence="1">
    <location>
        <position position="462"/>
    </location>
    <ligand>
        <name>meso-2,6-diaminopimelate</name>
        <dbReference type="ChEBI" id="CHEBI:57791"/>
    </ligand>
</feature>
<feature type="modified residue" description="N6-carboxylysine" evidence="1">
    <location>
        <position position="217"/>
    </location>
</feature>
<keyword id="KW-0067">ATP-binding</keyword>
<keyword id="KW-0131">Cell cycle</keyword>
<keyword id="KW-0132">Cell division</keyword>
<keyword id="KW-0133">Cell shape</keyword>
<keyword id="KW-0961">Cell wall biogenesis/degradation</keyword>
<keyword id="KW-0963">Cytoplasm</keyword>
<keyword id="KW-0436">Ligase</keyword>
<keyword id="KW-0460">Magnesium</keyword>
<keyword id="KW-0547">Nucleotide-binding</keyword>
<keyword id="KW-0573">Peptidoglycan synthesis</keyword>
<keyword id="KW-1185">Reference proteome</keyword>
<sequence length="491" mass="53747">MKLNELMQAIPVFTGEVSETIEISHIAQDSRKVKPGTLFICIDGEVVDGHKFASRAVELGAVAIIAEKQVDVSIPVIYVRDSKRAMAMLADYFYGSPTQALKLVGITGTNGKTTVSHLVEQIVRENGEQTGLIGTMYRKIGDQILETKNTTPDSLTLQETFRDMLLSGVSTAVMEVSSHALVQGRVYGSDYDVAVFMNLSQDHLDYHHTMEEYANAKSLLFAQLGNSYHTSNPKIAVLNADDAESVRMQKATAAHIITFGIKQEADFQASNIKITSHGSTFDLGTPVGNFTLKIKMIGNFSVYNVLAAIATSFALHIPMEKAIKTVESIPGVKGRFELVHAGQEFPVIVDYAHTPDGLLNVLETIDEFAEKRVFVVVGCGGDRDKGKRPQMAKIAVDYATNPIFTSDNPRSENPRAIIEDMIQGVPESDAYVVHENRRDAIRFAVNQAEAGDVILIAGKGHEDYQVVGDEVIDFDDRVEARIAIEKKLGLA</sequence>
<gene>
    <name evidence="1" type="primary">murE</name>
    <name type="ordered locus">lmo2038</name>
</gene>
<organism>
    <name type="scientific">Listeria monocytogenes serovar 1/2a (strain ATCC BAA-679 / EGD-e)</name>
    <dbReference type="NCBI Taxonomy" id="169963"/>
    <lineage>
        <taxon>Bacteria</taxon>
        <taxon>Bacillati</taxon>
        <taxon>Bacillota</taxon>
        <taxon>Bacilli</taxon>
        <taxon>Bacillales</taxon>
        <taxon>Listeriaceae</taxon>
        <taxon>Listeria</taxon>
    </lineage>
</organism>
<reference key="1">
    <citation type="journal article" date="2001" name="Science">
        <title>Comparative genomics of Listeria species.</title>
        <authorList>
            <person name="Glaser P."/>
            <person name="Frangeul L."/>
            <person name="Buchrieser C."/>
            <person name="Rusniok C."/>
            <person name="Amend A."/>
            <person name="Baquero F."/>
            <person name="Berche P."/>
            <person name="Bloecker H."/>
            <person name="Brandt P."/>
            <person name="Chakraborty T."/>
            <person name="Charbit A."/>
            <person name="Chetouani F."/>
            <person name="Couve E."/>
            <person name="de Daruvar A."/>
            <person name="Dehoux P."/>
            <person name="Domann E."/>
            <person name="Dominguez-Bernal G."/>
            <person name="Duchaud E."/>
            <person name="Durant L."/>
            <person name="Dussurget O."/>
            <person name="Entian K.-D."/>
            <person name="Fsihi H."/>
            <person name="Garcia-del Portillo F."/>
            <person name="Garrido P."/>
            <person name="Gautier L."/>
            <person name="Goebel W."/>
            <person name="Gomez-Lopez N."/>
            <person name="Hain T."/>
            <person name="Hauf J."/>
            <person name="Jackson D."/>
            <person name="Jones L.-M."/>
            <person name="Kaerst U."/>
            <person name="Kreft J."/>
            <person name="Kuhn M."/>
            <person name="Kunst F."/>
            <person name="Kurapkat G."/>
            <person name="Madueno E."/>
            <person name="Maitournam A."/>
            <person name="Mata Vicente J."/>
            <person name="Ng E."/>
            <person name="Nedjari H."/>
            <person name="Nordsiek G."/>
            <person name="Novella S."/>
            <person name="de Pablos B."/>
            <person name="Perez-Diaz J.-C."/>
            <person name="Purcell R."/>
            <person name="Remmel B."/>
            <person name="Rose M."/>
            <person name="Schlueter T."/>
            <person name="Simoes N."/>
            <person name="Tierrez A."/>
            <person name="Vazquez-Boland J.-A."/>
            <person name="Voss H."/>
            <person name="Wehland J."/>
            <person name="Cossart P."/>
        </authorList>
    </citation>
    <scope>NUCLEOTIDE SEQUENCE [LARGE SCALE GENOMIC DNA]</scope>
    <source>
        <strain>ATCC BAA-679 / EGD-e</strain>
    </source>
</reference>
<comment type="function">
    <text evidence="1">Catalyzes the addition of meso-diaminopimelic acid to the nucleotide precursor UDP-N-acetylmuramoyl-L-alanyl-D-glutamate (UMAG) in the biosynthesis of bacterial cell-wall peptidoglycan.</text>
</comment>
<comment type="catalytic activity">
    <reaction evidence="1">
        <text>UDP-N-acetyl-alpha-D-muramoyl-L-alanyl-D-glutamate + meso-2,6-diaminopimelate + ATP = UDP-N-acetyl-alpha-D-muramoyl-L-alanyl-gamma-D-glutamyl-meso-2,6-diaminopimelate + ADP + phosphate + H(+)</text>
        <dbReference type="Rhea" id="RHEA:23676"/>
        <dbReference type="ChEBI" id="CHEBI:15378"/>
        <dbReference type="ChEBI" id="CHEBI:30616"/>
        <dbReference type="ChEBI" id="CHEBI:43474"/>
        <dbReference type="ChEBI" id="CHEBI:57791"/>
        <dbReference type="ChEBI" id="CHEBI:83900"/>
        <dbReference type="ChEBI" id="CHEBI:83905"/>
        <dbReference type="ChEBI" id="CHEBI:456216"/>
        <dbReference type="EC" id="6.3.2.13"/>
    </reaction>
</comment>
<comment type="cofactor">
    <cofactor evidence="1">
        <name>Mg(2+)</name>
        <dbReference type="ChEBI" id="CHEBI:18420"/>
    </cofactor>
</comment>
<comment type="pathway">
    <text evidence="1">Cell wall biogenesis; peptidoglycan biosynthesis.</text>
</comment>
<comment type="subcellular location">
    <subcellularLocation>
        <location evidence="1">Cytoplasm</location>
    </subcellularLocation>
</comment>
<comment type="PTM">
    <text evidence="1">Carboxylation is probably crucial for Mg(2+) binding and, consequently, for the gamma-phosphate positioning of ATP.</text>
</comment>
<comment type="similarity">
    <text evidence="1">Belongs to the MurCDEF family. MurE subfamily.</text>
</comment>
<name>MURE_LISMO</name>
<dbReference type="EC" id="6.3.2.13" evidence="1"/>
<dbReference type="EMBL" id="AL591982">
    <property type="protein sequence ID" value="CAD00116.1"/>
    <property type="molecule type" value="Genomic_DNA"/>
</dbReference>
<dbReference type="PIR" id="AF1329">
    <property type="entry name" value="AF1329"/>
</dbReference>
<dbReference type="RefSeq" id="NP_465562.1">
    <property type="nucleotide sequence ID" value="NC_003210.1"/>
</dbReference>
<dbReference type="RefSeq" id="WP_010989880.1">
    <property type="nucleotide sequence ID" value="NZ_CP149495.1"/>
</dbReference>
<dbReference type="SMR" id="Q8Y5L9"/>
<dbReference type="STRING" id="169963.gene:17594723"/>
<dbReference type="PaxDb" id="169963-lmo2038"/>
<dbReference type="EnsemblBacteria" id="CAD00116">
    <property type="protein sequence ID" value="CAD00116"/>
    <property type="gene ID" value="CAD00116"/>
</dbReference>
<dbReference type="GeneID" id="987940"/>
<dbReference type="KEGG" id="lmo:lmo2038"/>
<dbReference type="PATRIC" id="fig|169963.11.peg.2086"/>
<dbReference type="eggNOG" id="COG0769">
    <property type="taxonomic scope" value="Bacteria"/>
</dbReference>
<dbReference type="HOGENOM" id="CLU_022291_4_1_9"/>
<dbReference type="OrthoDB" id="9800958at2"/>
<dbReference type="PhylomeDB" id="Q8Y5L9"/>
<dbReference type="BioCyc" id="LMON169963:LMO2038-MONOMER"/>
<dbReference type="UniPathway" id="UPA00219"/>
<dbReference type="Proteomes" id="UP000000817">
    <property type="component" value="Chromosome"/>
</dbReference>
<dbReference type="GO" id="GO:0005737">
    <property type="term" value="C:cytoplasm"/>
    <property type="evidence" value="ECO:0007669"/>
    <property type="project" value="UniProtKB-SubCell"/>
</dbReference>
<dbReference type="GO" id="GO:0005524">
    <property type="term" value="F:ATP binding"/>
    <property type="evidence" value="ECO:0007669"/>
    <property type="project" value="UniProtKB-UniRule"/>
</dbReference>
<dbReference type="GO" id="GO:0000287">
    <property type="term" value="F:magnesium ion binding"/>
    <property type="evidence" value="ECO:0007669"/>
    <property type="project" value="UniProtKB-UniRule"/>
</dbReference>
<dbReference type="GO" id="GO:0004326">
    <property type="term" value="F:tetrahydrofolylpolyglutamate synthase activity"/>
    <property type="evidence" value="ECO:0007669"/>
    <property type="project" value="InterPro"/>
</dbReference>
<dbReference type="GO" id="GO:0008765">
    <property type="term" value="F:UDP-N-acetylmuramoylalanyl-D-glutamate-2,6-diaminopimelate ligase activity"/>
    <property type="evidence" value="ECO:0007669"/>
    <property type="project" value="UniProtKB-UniRule"/>
</dbReference>
<dbReference type="GO" id="GO:0051301">
    <property type="term" value="P:cell division"/>
    <property type="evidence" value="ECO:0007669"/>
    <property type="project" value="UniProtKB-KW"/>
</dbReference>
<dbReference type="GO" id="GO:0071555">
    <property type="term" value="P:cell wall organization"/>
    <property type="evidence" value="ECO:0007669"/>
    <property type="project" value="UniProtKB-KW"/>
</dbReference>
<dbReference type="GO" id="GO:0009252">
    <property type="term" value="P:peptidoglycan biosynthetic process"/>
    <property type="evidence" value="ECO:0007669"/>
    <property type="project" value="UniProtKB-UniRule"/>
</dbReference>
<dbReference type="GO" id="GO:0008360">
    <property type="term" value="P:regulation of cell shape"/>
    <property type="evidence" value="ECO:0007669"/>
    <property type="project" value="UniProtKB-KW"/>
</dbReference>
<dbReference type="FunFam" id="3.40.1390.10:FF:000005">
    <property type="entry name" value="UDP-N-acetylmuramoyl-L-alanyl-D-glutamate--2,6-diaminopimelate ligase"/>
    <property type="match status" value="1"/>
</dbReference>
<dbReference type="FunFam" id="3.90.190.20:FF:000006">
    <property type="entry name" value="UDP-N-acetylmuramoyl-L-alanyl-D-glutamate--2,6-diaminopimelate ligase"/>
    <property type="match status" value="1"/>
</dbReference>
<dbReference type="Gene3D" id="3.90.190.20">
    <property type="entry name" value="Mur ligase, C-terminal domain"/>
    <property type="match status" value="1"/>
</dbReference>
<dbReference type="Gene3D" id="3.40.1190.10">
    <property type="entry name" value="Mur-like, catalytic domain"/>
    <property type="match status" value="1"/>
</dbReference>
<dbReference type="Gene3D" id="3.40.1390.10">
    <property type="entry name" value="MurE/MurF, N-terminal domain"/>
    <property type="match status" value="1"/>
</dbReference>
<dbReference type="HAMAP" id="MF_00208">
    <property type="entry name" value="MurE"/>
    <property type="match status" value="1"/>
</dbReference>
<dbReference type="InterPro" id="IPR018109">
    <property type="entry name" value="Folylpolyglutamate_synth_CS"/>
</dbReference>
<dbReference type="InterPro" id="IPR036565">
    <property type="entry name" value="Mur-like_cat_sf"/>
</dbReference>
<dbReference type="InterPro" id="IPR004101">
    <property type="entry name" value="Mur_ligase_C"/>
</dbReference>
<dbReference type="InterPro" id="IPR036615">
    <property type="entry name" value="Mur_ligase_C_dom_sf"/>
</dbReference>
<dbReference type="InterPro" id="IPR013221">
    <property type="entry name" value="Mur_ligase_cen"/>
</dbReference>
<dbReference type="InterPro" id="IPR000713">
    <property type="entry name" value="Mur_ligase_N"/>
</dbReference>
<dbReference type="InterPro" id="IPR035911">
    <property type="entry name" value="MurE/MurF_N"/>
</dbReference>
<dbReference type="InterPro" id="IPR005761">
    <property type="entry name" value="UDP-N-AcMur-Glu-dNH2Pim_ligase"/>
</dbReference>
<dbReference type="NCBIfam" id="TIGR01085">
    <property type="entry name" value="murE"/>
    <property type="match status" value="1"/>
</dbReference>
<dbReference type="NCBIfam" id="NF001124">
    <property type="entry name" value="PRK00139.1-2"/>
    <property type="match status" value="1"/>
</dbReference>
<dbReference type="NCBIfam" id="NF001126">
    <property type="entry name" value="PRK00139.1-4"/>
    <property type="match status" value="1"/>
</dbReference>
<dbReference type="PANTHER" id="PTHR23135">
    <property type="entry name" value="MUR LIGASE FAMILY MEMBER"/>
    <property type="match status" value="1"/>
</dbReference>
<dbReference type="PANTHER" id="PTHR23135:SF4">
    <property type="entry name" value="UDP-N-ACETYLMURAMOYL-L-ALANYL-D-GLUTAMATE--2,6-DIAMINOPIMELATE LIGASE MURE HOMOLOG, CHLOROPLASTIC"/>
    <property type="match status" value="1"/>
</dbReference>
<dbReference type="Pfam" id="PF01225">
    <property type="entry name" value="Mur_ligase"/>
    <property type="match status" value="1"/>
</dbReference>
<dbReference type="Pfam" id="PF02875">
    <property type="entry name" value="Mur_ligase_C"/>
    <property type="match status" value="1"/>
</dbReference>
<dbReference type="Pfam" id="PF08245">
    <property type="entry name" value="Mur_ligase_M"/>
    <property type="match status" value="1"/>
</dbReference>
<dbReference type="SUPFAM" id="SSF53623">
    <property type="entry name" value="MurD-like peptide ligases, catalytic domain"/>
    <property type="match status" value="1"/>
</dbReference>
<dbReference type="SUPFAM" id="SSF53244">
    <property type="entry name" value="MurD-like peptide ligases, peptide-binding domain"/>
    <property type="match status" value="1"/>
</dbReference>
<dbReference type="SUPFAM" id="SSF63418">
    <property type="entry name" value="MurE/MurF N-terminal domain"/>
    <property type="match status" value="1"/>
</dbReference>